<feature type="chain" id="PRO_0000192539" description="Glutamate--cysteine ligase">
    <location>
        <begin position="1"/>
        <end position="518"/>
    </location>
</feature>
<feature type="sequence conflict" description="In Ref. 1; AAC09345." evidence="1" ref="1">
    <original>EAAKE</original>
    <variation>GSGKR</variation>
    <location>
        <begin position="170"/>
        <end position="174"/>
    </location>
</feature>
<feature type="sequence conflict" description="In Ref. 1; AAC09345." evidence="1" ref="1">
    <original>G</original>
    <variation>R</variation>
    <location>
        <position position="384"/>
    </location>
</feature>
<gene>
    <name type="primary">gshA</name>
    <name type="ordered locus">STM2818</name>
</gene>
<evidence type="ECO:0000305" key="1"/>
<comment type="catalytic activity">
    <reaction>
        <text>L-cysteine + L-glutamate + ATP = gamma-L-glutamyl-L-cysteine + ADP + phosphate + H(+)</text>
        <dbReference type="Rhea" id="RHEA:13285"/>
        <dbReference type="ChEBI" id="CHEBI:15378"/>
        <dbReference type="ChEBI" id="CHEBI:29985"/>
        <dbReference type="ChEBI" id="CHEBI:30616"/>
        <dbReference type="ChEBI" id="CHEBI:35235"/>
        <dbReference type="ChEBI" id="CHEBI:43474"/>
        <dbReference type="ChEBI" id="CHEBI:58173"/>
        <dbReference type="ChEBI" id="CHEBI:456216"/>
        <dbReference type="EC" id="6.3.2.2"/>
    </reaction>
</comment>
<comment type="pathway">
    <text>Sulfur metabolism; glutathione biosynthesis; glutathione from L-cysteine and L-glutamate: step 1/2.</text>
</comment>
<comment type="similarity">
    <text evidence="1">Belongs to the glutamate--cysteine ligase type 1 family. Type 1 subfamily.</text>
</comment>
<reference key="1">
    <citation type="submission" date="1998-03" db="EMBL/GenBank/DDBJ databases">
        <authorList>
            <person name="Thomas M.G."/>
            <person name="Enos J.M."/>
            <person name="Escalante-Semerena J.C."/>
        </authorList>
    </citation>
    <scope>NUCLEOTIDE SEQUENCE [GENOMIC DNA]</scope>
    <source>
        <strain>LT2</strain>
    </source>
</reference>
<reference key="2">
    <citation type="journal article" date="2001" name="Nature">
        <title>Complete genome sequence of Salmonella enterica serovar Typhimurium LT2.</title>
        <authorList>
            <person name="McClelland M."/>
            <person name="Sanderson K.E."/>
            <person name="Spieth J."/>
            <person name="Clifton S.W."/>
            <person name="Latreille P."/>
            <person name="Courtney L."/>
            <person name="Porwollik S."/>
            <person name="Ali J."/>
            <person name="Dante M."/>
            <person name="Du F."/>
            <person name="Hou S."/>
            <person name="Layman D."/>
            <person name="Leonard S."/>
            <person name="Nguyen C."/>
            <person name="Scott K."/>
            <person name="Holmes A."/>
            <person name="Grewal N."/>
            <person name="Mulvaney E."/>
            <person name="Ryan E."/>
            <person name="Sun H."/>
            <person name="Florea L."/>
            <person name="Miller W."/>
            <person name="Stoneking T."/>
            <person name="Nhan M."/>
            <person name="Waterston R."/>
            <person name="Wilson R.K."/>
        </authorList>
    </citation>
    <scope>NUCLEOTIDE SEQUENCE [LARGE SCALE GENOMIC DNA]</scope>
    <source>
        <strain>LT2 / SGSC1412 / ATCC 700720</strain>
    </source>
</reference>
<reference key="3">
    <citation type="submission" date="2000-05" db="EMBL/GenBank/DDBJ databases">
        <title>Salmonella typhimurium luxS gene.</title>
        <authorList>
            <person name="Rychlik I."/>
            <person name="Sevcik M."/>
            <person name="Sebkova A."/>
            <person name="Volf J."/>
        </authorList>
    </citation>
    <scope>NUCLEOTIDE SEQUENCE [GENOMIC DNA] OF 427-518</scope>
</reference>
<accession>O68838</accession>
<accession>Q9L4T1</accession>
<protein>
    <recommendedName>
        <fullName>Glutamate--cysteine ligase</fullName>
        <ecNumber>6.3.2.2</ecNumber>
    </recommendedName>
    <alternativeName>
        <fullName>Gamma-ECS</fullName>
        <shortName>GCS</shortName>
    </alternativeName>
    <alternativeName>
        <fullName>Gamma-glutamylcysteine synthetase</fullName>
    </alternativeName>
</protein>
<sequence>MIPDVSQALAWLEKHPQALKGIQRGLERETLRVNADGTLATTGHPEALGSALTHKWITTDFAEALLEFITPVDGDIQHMLTFMRDLHRYTARKLGDERMWPLSMPCYIAEGQDIELAQYGTSNTGRFKTLYREGLKNRYGALMQTISGVHYNFSLPMAFWQAKCGVTEGEAAKEKISAGYFRLIRNYYRFGWVIPYLFGASPAICSSFLQGKPTTLPFEKTDCGMYYLPYATSLRLSDLGYTNKSQSNLGITFNDLHEYVAGLKRAIKTPSEEYARIGVEKDGKRLQINSNVLQIENELYAPIRPKRVTRSGESPSDALLRGGIEYIEVRSLDINPFSPIGVDEQQVRFLDLFMVWCVLADAPEMSSDELLCTRTNWNRVILEGRKPGLTLGIGCETAQFPLPKVGKDLFRDLKRVAQTLDSIHGGEEYQKVCDELVACFDNPELTFSARILRSMIDEGIGGTGKAFGEAYRNLLREEPLEILQEEEFIAERDASVRRQQEIEAADTEPFAAWLAKHA</sequence>
<name>GSH1_SALTY</name>
<proteinExistence type="inferred from homology"/>
<keyword id="KW-0067">ATP-binding</keyword>
<keyword id="KW-0317">Glutathione biosynthesis</keyword>
<keyword id="KW-0436">Ligase</keyword>
<keyword id="KW-0547">Nucleotide-binding</keyword>
<keyword id="KW-1185">Reference proteome</keyword>
<dbReference type="EC" id="6.3.2.2"/>
<dbReference type="EMBL" id="AF055352">
    <property type="protein sequence ID" value="AAC09345.1"/>
    <property type="molecule type" value="Genomic_DNA"/>
</dbReference>
<dbReference type="EMBL" id="AE006468">
    <property type="protein sequence ID" value="AAL21703.1"/>
    <property type="molecule type" value="Genomic_DNA"/>
</dbReference>
<dbReference type="EMBL" id="AF268390">
    <property type="protein sequence ID" value="AAF73474.1"/>
    <property type="molecule type" value="Genomic_DNA"/>
</dbReference>
<dbReference type="RefSeq" id="NP_461744.1">
    <property type="nucleotide sequence ID" value="NC_003197.2"/>
</dbReference>
<dbReference type="RefSeq" id="WP_000611821.1">
    <property type="nucleotide sequence ID" value="NC_003197.2"/>
</dbReference>
<dbReference type="SMR" id="O68838"/>
<dbReference type="STRING" id="99287.STM2818"/>
<dbReference type="PaxDb" id="99287-STM2818"/>
<dbReference type="GeneID" id="1254341"/>
<dbReference type="KEGG" id="stm:STM2818"/>
<dbReference type="PATRIC" id="fig|99287.12.peg.2976"/>
<dbReference type="HOGENOM" id="CLU_020728_3_0_6"/>
<dbReference type="OMA" id="TRKNWNR"/>
<dbReference type="PhylomeDB" id="O68838"/>
<dbReference type="BioCyc" id="SENT99287:STM2818-MONOMER"/>
<dbReference type="UniPathway" id="UPA00142">
    <property type="reaction ID" value="UER00209"/>
</dbReference>
<dbReference type="Proteomes" id="UP000001014">
    <property type="component" value="Chromosome"/>
</dbReference>
<dbReference type="GO" id="GO:0005829">
    <property type="term" value="C:cytosol"/>
    <property type="evidence" value="ECO:0000318"/>
    <property type="project" value="GO_Central"/>
</dbReference>
<dbReference type="GO" id="GO:0005524">
    <property type="term" value="F:ATP binding"/>
    <property type="evidence" value="ECO:0007669"/>
    <property type="project" value="UniProtKB-KW"/>
</dbReference>
<dbReference type="GO" id="GO:0004357">
    <property type="term" value="F:glutamate-cysteine ligase activity"/>
    <property type="evidence" value="ECO:0000318"/>
    <property type="project" value="GO_Central"/>
</dbReference>
<dbReference type="GO" id="GO:0046872">
    <property type="term" value="F:metal ion binding"/>
    <property type="evidence" value="ECO:0000318"/>
    <property type="project" value="GO_Central"/>
</dbReference>
<dbReference type="GO" id="GO:0006750">
    <property type="term" value="P:glutathione biosynthetic process"/>
    <property type="evidence" value="ECO:0000318"/>
    <property type="project" value="GO_Central"/>
</dbReference>
<dbReference type="FunFam" id="3.30.590.20:FF:000001">
    <property type="entry name" value="Glutamate--cysteine ligase"/>
    <property type="match status" value="1"/>
</dbReference>
<dbReference type="Gene3D" id="3.30.590.20">
    <property type="match status" value="1"/>
</dbReference>
<dbReference type="HAMAP" id="MF_00578">
    <property type="entry name" value="Glu_cys_ligase"/>
    <property type="match status" value="1"/>
</dbReference>
<dbReference type="InterPro" id="IPR014746">
    <property type="entry name" value="Gln_synth/guanido_kin_cat_dom"/>
</dbReference>
<dbReference type="InterPro" id="IPR007370">
    <property type="entry name" value="Glu_cys_ligase"/>
</dbReference>
<dbReference type="InterPro" id="IPR006334">
    <property type="entry name" value="Glut_cys_ligase"/>
</dbReference>
<dbReference type="NCBIfam" id="TIGR01434">
    <property type="entry name" value="glu_cys_ligase"/>
    <property type="match status" value="1"/>
</dbReference>
<dbReference type="PANTHER" id="PTHR38761">
    <property type="entry name" value="GLUTAMATE--CYSTEINE LIGASE"/>
    <property type="match status" value="1"/>
</dbReference>
<dbReference type="PANTHER" id="PTHR38761:SF1">
    <property type="entry name" value="GLUTAMATE--CYSTEINE LIGASE"/>
    <property type="match status" value="1"/>
</dbReference>
<dbReference type="Pfam" id="PF04262">
    <property type="entry name" value="Glu_cys_ligase"/>
    <property type="match status" value="1"/>
</dbReference>
<dbReference type="SUPFAM" id="SSF55931">
    <property type="entry name" value="Glutamine synthetase/guanido kinase"/>
    <property type="match status" value="1"/>
</dbReference>
<organism>
    <name type="scientific">Salmonella typhimurium (strain LT2 / SGSC1412 / ATCC 700720)</name>
    <dbReference type="NCBI Taxonomy" id="99287"/>
    <lineage>
        <taxon>Bacteria</taxon>
        <taxon>Pseudomonadati</taxon>
        <taxon>Pseudomonadota</taxon>
        <taxon>Gammaproteobacteria</taxon>
        <taxon>Enterobacterales</taxon>
        <taxon>Enterobacteriaceae</taxon>
        <taxon>Salmonella</taxon>
    </lineage>
</organism>